<sequence length="800" mass="86003">MNTNSELSLENLNAAGDAAARAIPPLWPLASSVAVNPYLGQTAETLALAGARLGRVGGVPVTMPRAWYAARIADGTITDADLSAALAVNPTAAADLEALKAHAEQPESAQKPLPTLADLAADASGIDWPGILADRIGLWAAGYFDQGQALWAAPHRRGAYDAWRQYATHDLTPEIAGLSGFAQFVSETPDTADQASTRAANRLGLSDAALETYLHQLLFTLGGWAQVARYRLWQAELAGKSDATITDMLTIRLLWEEALFAQYEEEIGAEWEKVVAAHAAPVASDADLQVNAVLQEAWERAGQRDLAETFSMPAPKADDTRPALQAAFCIDVRSEVFRRALESLTPDIKTLGFAGFFGLTPAHKGFASDVDELRLPVLLNPGLTSTSQGDDAEADQTARFKARASRAWGRFKLAAVSSFAFVEATGPIYAGKLVRDALNMAPNDVPGGPMPRLDPSVDLAAQTDAAETILRAMSFTDNFARLVVLAGHGANVVNNPFASGLHCGACGGYSGEVNARLLAGLLNNVDVRRGLVERGITIPDDTIFVGALHDTTTDAMTLYEADHPSKAHAADLKQAKAWFLSAGSVTRAERALRLPRAEGTDDINLRSRDWAETRPEWALAGCKAFVAAPRQRTAGRSLEGRAFLHDYDWQQDKGFGVLELIMTAPVVVASWISLQYYGSTVSPDVFGSGNKLLHNVTGGIGVVEGNGGTLRTGLPWQSVHEGEDFAHEPLRLSVCIEAPREAMSDILKRHDGVRALFDNRWLHLFALDENGQMAWRYEGDLEWSQMPVASEAIPETEVAA</sequence>
<organism>
    <name type="scientific">Roseobacter denitrificans (strain ATCC 33942 / OCh 114)</name>
    <name type="common">Erythrobacter sp. (strain OCh 114)</name>
    <name type="synonym">Roseobacter denitrificans</name>
    <dbReference type="NCBI Taxonomy" id="375451"/>
    <lineage>
        <taxon>Bacteria</taxon>
        <taxon>Pseudomonadati</taxon>
        <taxon>Pseudomonadota</taxon>
        <taxon>Alphaproteobacteria</taxon>
        <taxon>Rhodobacterales</taxon>
        <taxon>Roseobacteraceae</taxon>
        <taxon>Roseobacter</taxon>
    </lineage>
</organism>
<evidence type="ECO:0000255" key="1">
    <source>
        <dbReference type="HAMAP-Rule" id="MF_01871"/>
    </source>
</evidence>
<reference key="1">
    <citation type="journal article" date="2007" name="J. Bacteriol.">
        <title>The complete genome sequence of Roseobacter denitrificans reveals a mixotrophic rather than photosynthetic metabolism.</title>
        <authorList>
            <person name="Swingley W.D."/>
            <person name="Sadekar S."/>
            <person name="Mastrian S.D."/>
            <person name="Matthies H.J."/>
            <person name="Hao J."/>
            <person name="Ramos H."/>
            <person name="Acharya C.R."/>
            <person name="Conrad A.L."/>
            <person name="Taylor H.L."/>
            <person name="Dejesa L.C."/>
            <person name="Shah M.K."/>
            <person name="O'Huallachain M.E."/>
            <person name="Lince M.T."/>
            <person name="Blankenship R.E."/>
            <person name="Beatty J.T."/>
            <person name="Touchman J.W."/>
        </authorList>
    </citation>
    <scope>NUCLEOTIDE SEQUENCE [LARGE SCALE GENOMIC DNA]</scope>
    <source>
        <strain>ATCC 33942 / OCh 114</strain>
    </source>
</reference>
<proteinExistence type="inferred from homology"/>
<comment type="function">
    <text evidence="1">Part of an energy-coupled inorganic carbon pump.</text>
</comment>
<comment type="cofactor">
    <cofactor evidence="1">
        <name>Zn(2+)</name>
        <dbReference type="ChEBI" id="CHEBI:29105"/>
    </cofactor>
</comment>
<comment type="subunit">
    <text evidence="1">Forms a complex with DabB.</text>
</comment>
<comment type="subcellular location">
    <subcellularLocation>
        <location evidence="1">Cell inner membrane</location>
        <topology evidence="1">Peripheral membrane protein</topology>
    </subcellularLocation>
</comment>
<comment type="similarity">
    <text evidence="1">Belongs to the inorganic carbon transporter (TC 9.A.2) DabA family.</text>
</comment>
<name>DABA_ROSDO</name>
<gene>
    <name evidence="1" type="primary">dabA</name>
    <name type="ordered locus">RD1_4144</name>
</gene>
<dbReference type="EMBL" id="CP000362">
    <property type="protein sequence ID" value="ABG33584.1"/>
    <property type="molecule type" value="Genomic_DNA"/>
</dbReference>
<dbReference type="RefSeq" id="WP_011570194.1">
    <property type="nucleotide sequence ID" value="NC_008209.1"/>
</dbReference>
<dbReference type="STRING" id="375451.RD1_4144"/>
<dbReference type="KEGG" id="rde:RD1_4144"/>
<dbReference type="eggNOG" id="COG3002">
    <property type="taxonomic scope" value="Bacteria"/>
</dbReference>
<dbReference type="HOGENOM" id="CLU_009885_1_0_5"/>
<dbReference type="OrthoDB" id="9805101at2"/>
<dbReference type="Proteomes" id="UP000007029">
    <property type="component" value="Chromosome"/>
</dbReference>
<dbReference type="GO" id="GO:0005886">
    <property type="term" value="C:plasma membrane"/>
    <property type="evidence" value="ECO:0007669"/>
    <property type="project" value="UniProtKB-SubCell"/>
</dbReference>
<dbReference type="GO" id="GO:0008270">
    <property type="term" value="F:zinc ion binding"/>
    <property type="evidence" value="ECO:0007669"/>
    <property type="project" value="UniProtKB-UniRule"/>
</dbReference>
<dbReference type="HAMAP" id="MF_01871">
    <property type="entry name" value="DabA"/>
    <property type="match status" value="1"/>
</dbReference>
<dbReference type="InterPro" id="IPR018752">
    <property type="entry name" value="DabA"/>
</dbReference>
<dbReference type="PANTHER" id="PTHR38344:SF1">
    <property type="entry name" value="INORGANIC CARBON TRANSPORTER SUBUNIT DABA-RELATED"/>
    <property type="match status" value="1"/>
</dbReference>
<dbReference type="PANTHER" id="PTHR38344">
    <property type="entry name" value="UPF0753 PROTEIN AQ_863"/>
    <property type="match status" value="1"/>
</dbReference>
<dbReference type="Pfam" id="PF10070">
    <property type="entry name" value="DabA"/>
    <property type="match status" value="1"/>
</dbReference>
<keyword id="KW-0997">Cell inner membrane</keyword>
<keyword id="KW-1003">Cell membrane</keyword>
<keyword id="KW-0472">Membrane</keyword>
<keyword id="KW-0479">Metal-binding</keyword>
<keyword id="KW-1185">Reference proteome</keyword>
<keyword id="KW-0813">Transport</keyword>
<keyword id="KW-0862">Zinc</keyword>
<accession>Q160K9</accession>
<feature type="chain" id="PRO_0000387297" description="Probable inorganic carbon transporter subunit DabA">
    <location>
        <begin position="1"/>
        <end position="800"/>
    </location>
</feature>
<feature type="binding site" evidence="1">
    <location>
        <position position="329"/>
    </location>
    <ligand>
        <name>Zn(2+)</name>
        <dbReference type="ChEBI" id="CHEBI:29105"/>
    </ligand>
</feature>
<feature type="binding site" evidence="1">
    <location>
        <position position="331"/>
    </location>
    <ligand>
        <name>Zn(2+)</name>
        <dbReference type="ChEBI" id="CHEBI:29105"/>
    </ligand>
</feature>
<feature type="binding site" evidence="1">
    <location>
        <position position="488"/>
    </location>
    <ligand>
        <name>Zn(2+)</name>
        <dbReference type="ChEBI" id="CHEBI:29105"/>
    </ligand>
</feature>
<feature type="binding site" evidence="1">
    <location>
        <position position="503"/>
    </location>
    <ligand>
        <name>Zn(2+)</name>
        <dbReference type="ChEBI" id="CHEBI:29105"/>
    </ligand>
</feature>
<protein>
    <recommendedName>
        <fullName evidence="1">Probable inorganic carbon transporter subunit DabA</fullName>
    </recommendedName>
</protein>